<reference key="1">
    <citation type="journal article" date="2000" name="Nature">
        <title>Sequence and analysis of chromosome 3 of the plant Arabidopsis thaliana.</title>
        <authorList>
            <person name="Salanoubat M."/>
            <person name="Lemcke K."/>
            <person name="Rieger M."/>
            <person name="Ansorge W."/>
            <person name="Unseld M."/>
            <person name="Fartmann B."/>
            <person name="Valle G."/>
            <person name="Bloecker H."/>
            <person name="Perez-Alonso M."/>
            <person name="Obermaier B."/>
            <person name="Delseny M."/>
            <person name="Boutry M."/>
            <person name="Grivell L.A."/>
            <person name="Mache R."/>
            <person name="Puigdomenech P."/>
            <person name="De Simone V."/>
            <person name="Choisne N."/>
            <person name="Artiguenave F."/>
            <person name="Robert C."/>
            <person name="Brottier P."/>
            <person name="Wincker P."/>
            <person name="Cattolico L."/>
            <person name="Weissenbach J."/>
            <person name="Saurin W."/>
            <person name="Quetier F."/>
            <person name="Schaefer M."/>
            <person name="Mueller-Auer S."/>
            <person name="Gabel C."/>
            <person name="Fuchs M."/>
            <person name="Benes V."/>
            <person name="Wurmbach E."/>
            <person name="Drzonek H."/>
            <person name="Erfle H."/>
            <person name="Jordan N."/>
            <person name="Bangert S."/>
            <person name="Wiedelmann R."/>
            <person name="Kranz H."/>
            <person name="Voss H."/>
            <person name="Holland R."/>
            <person name="Brandt P."/>
            <person name="Nyakatura G."/>
            <person name="Vezzi A."/>
            <person name="D'Angelo M."/>
            <person name="Pallavicini A."/>
            <person name="Toppo S."/>
            <person name="Simionati B."/>
            <person name="Conrad A."/>
            <person name="Hornischer K."/>
            <person name="Kauer G."/>
            <person name="Loehnert T.-H."/>
            <person name="Nordsiek G."/>
            <person name="Reichelt J."/>
            <person name="Scharfe M."/>
            <person name="Schoen O."/>
            <person name="Bargues M."/>
            <person name="Terol J."/>
            <person name="Climent J."/>
            <person name="Navarro P."/>
            <person name="Collado C."/>
            <person name="Perez-Perez A."/>
            <person name="Ottenwaelder B."/>
            <person name="Duchemin D."/>
            <person name="Cooke R."/>
            <person name="Laudie M."/>
            <person name="Berger-Llauro C."/>
            <person name="Purnelle B."/>
            <person name="Masuy D."/>
            <person name="de Haan M."/>
            <person name="Maarse A.C."/>
            <person name="Alcaraz J.-P."/>
            <person name="Cottet A."/>
            <person name="Casacuberta E."/>
            <person name="Monfort A."/>
            <person name="Argiriou A."/>
            <person name="Flores M."/>
            <person name="Liguori R."/>
            <person name="Vitale D."/>
            <person name="Mannhaupt G."/>
            <person name="Haase D."/>
            <person name="Schoof H."/>
            <person name="Rudd S."/>
            <person name="Zaccaria P."/>
            <person name="Mewes H.-W."/>
            <person name="Mayer K.F.X."/>
            <person name="Kaul S."/>
            <person name="Town C.D."/>
            <person name="Koo H.L."/>
            <person name="Tallon L.J."/>
            <person name="Jenkins J."/>
            <person name="Rooney T."/>
            <person name="Rizzo M."/>
            <person name="Walts A."/>
            <person name="Utterback T."/>
            <person name="Fujii C.Y."/>
            <person name="Shea T.P."/>
            <person name="Creasy T.H."/>
            <person name="Haas B."/>
            <person name="Maiti R."/>
            <person name="Wu D."/>
            <person name="Peterson J."/>
            <person name="Van Aken S."/>
            <person name="Pai G."/>
            <person name="Militscher J."/>
            <person name="Sellers P."/>
            <person name="Gill J.E."/>
            <person name="Feldblyum T.V."/>
            <person name="Preuss D."/>
            <person name="Lin X."/>
            <person name="Nierman W.C."/>
            <person name="Salzberg S.L."/>
            <person name="White O."/>
            <person name="Venter J.C."/>
            <person name="Fraser C.M."/>
            <person name="Kaneko T."/>
            <person name="Nakamura Y."/>
            <person name="Sato S."/>
            <person name="Kato T."/>
            <person name="Asamizu E."/>
            <person name="Sasamoto S."/>
            <person name="Kimura T."/>
            <person name="Idesawa K."/>
            <person name="Kawashima K."/>
            <person name="Kishida Y."/>
            <person name="Kiyokawa C."/>
            <person name="Kohara M."/>
            <person name="Matsumoto M."/>
            <person name="Matsuno A."/>
            <person name="Muraki A."/>
            <person name="Nakayama S."/>
            <person name="Nakazaki N."/>
            <person name="Shinpo S."/>
            <person name="Takeuchi C."/>
            <person name="Wada T."/>
            <person name="Watanabe A."/>
            <person name="Yamada M."/>
            <person name="Yasuda M."/>
            <person name="Tabata S."/>
        </authorList>
    </citation>
    <scope>NUCLEOTIDE SEQUENCE [LARGE SCALE GENOMIC DNA]</scope>
    <source>
        <strain>cv. Columbia</strain>
    </source>
</reference>
<reference key="2">
    <citation type="journal article" date="2017" name="Plant J.">
        <title>Araport11: a complete reannotation of the Arabidopsis thaliana reference genome.</title>
        <authorList>
            <person name="Cheng C.Y."/>
            <person name="Krishnakumar V."/>
            <person name="Chan A.P."/>
            <person name="Thibaud-Nissen F."/>
            <person name="Schobel S."/>
            <person name="Town C.D."/>
        </authorList>
    </citation>
    <scope>GENOME REANNOTATION</scope>
    <source>
        <strain>cv. Columbia</strain>
    </source>
</reference>
<reference key="3">
    <citation type="journal article" date="2003" name="Science">
        <title>Empirical analysis of transcriptional activity in the Arabidopsis genome.</title>
        <authorList>
            <person name="Yamada K."/>
            <person name="Lim J."/>
            <person name="Dale J.M."/>
            <person name="Chen H."/>
            <person name="Shinn P."/>
            <person name="Palm C.J."/>
            <person name="Southwick A.M."/>
            <person name="Wu H.C."/>
            <person name="Kim C.J."/>
            <person name="Nguyen M."/>
            <person name="Pham P.K."/>
            <person name="Cheuk R.F."/>
            <person name="Karlin-Newmann G."/>
            <person name="Liu S.X."/>
            <person name="Lam B."/>
            <person name="Sakano H."/>
            <person name="Wu T."/>
            <person name="Yu G."/>
            <person name="Miranda M."/>
            <person name="Quach H.L."/>
            <person name="Tripp M."/>
            <person name="Chang C.H."/>
            <person name="Lee J.M."/>
            <person name="Toriumi M.J."/>
            <person name="Chan M.M."/>
            <person name="Tang C.C."/>
            <person name="Onodera C.S."/>
            <person name="Deng J.M."/>
            <person name="Akiyama K."/>
            <person name="Ansari Y."/>
            <person name="Arakawa T."/>
            <person name="Banh J."/>
            <person name="Banno F."/>
            <person name="Bowser L."/>
            <person name="Brooks S.Y."/>
            <person name="Carninci P."/>
            <person name="Chao Q."/>
            <person name="Choy N."/>
            <person name="Enju A."/>
            <person name="Goldsmith A.D."/>
            <person name="Gurjal M."/>
            <person name="Hansen N.F."/>
            <person name="Hayashizaki Y."/>
            <person name="Johnson-Hopson C."/>
            <person name="Hsuan V.W."/>
            <person name="Iida K."/>
            <person name="Karnes M."/>
            <person name="Khan S."/>
            <person name="Koesema E."/>
            <person name="Ishida J."/>
            <person name="Jiang P.X."/>
            <person name="Jones T."/>
            <person name="Kawai J."/>
            <person name="Kamiya A."/>
            <person name="Meyers C."/>
            <person name="Nakajima M."/>
            <person name="Narusaka M."/>
            <person name="Seki M."/>
            <person name="Sakurai T."/>
            <person name="Satou M."/>
            <person name="Tamse R."/>
            <person name="Vaysberg M."/>
            <person name="Wallender E.K."/>
            <person name="Wong C."/>
            <person name="Yamamura Y."/>
            <person name="Yuan S."/>
            <person name="Shinozaki K."/>
            <person name="Davis R.W."/>
            <person name="Theologis A."/>
            <person name="Ecker J.R."/>
        </authorList>
    </citation>
    <scope>NUCLEOTIDE SEQUENCE [LARGE SCALE MRNA] OF 553-1050</scope>
    <source>
        <strain>cv. Columbia</strain>
    </source>
</reference>
<reference key="4">
    <citation type="submission" date="2006-07" db="EMBL/GenBank/DDBJ databases">
        <title>Large-scale analysis of RIKEN Arabidopsis full-length (RAFL) cDNAs.</title>
        <authorList>
            <person name="Totoki Y."/>
            <person name="Seki M."/>
            <person name="Ishida J."/>
            <person name="Nakajima M."/>
            <person name="Enju A."/>
            <person name="Kamiya A."/>
            <person name="Narusaka M."/>
            <person name="Shin-i T."/>
            <person name="Nakagawa M."/>
            <person name="Sakamoto N."/>
            <person name="Oishi K."/>
            <person name="Kohara Y."/>
            <person name="Kobayashi M."/>
            <person name="Toyoda A."/>
            <person name="Sakaki Y."/>
            <person name="Sakurai T."/>
            <person name="Iida K."/>
            <person name="Akiyama K."/>
            <person name="Satou M."/>
            <person name="Toyoda T."/>
            <person name="Konagaya A."/>
            <person name="Carninci P."/>
            <person name="Kawai J."/>
            <person name="Hayashizaki Y."/>
            <person name="Shinozaki K."/>
        </authorList>
    </citation>
    <scope>NUCLEOTIDE SEQUENCE [LARGE SCALE MRNA] OF 296-1050</scope>
    <source>
        <strain>cv. Columbia</strain>
    </source>
</reference>
<reference key="5">
    <citation type="journal article" date="2006" name="Proc. Natl. Acad. Sci. U.S.A.">
        <title>Genetic basis for natural variation in seed vitamin E levels in Arabidopsis thaliana.</title>
        <authorList>
            <person name="Gilliland L.U."/>
            <person name="Magallanes-Lundback M."/>
            <person name="Hemming C."/>
            <person name="Supplee A."/>
            <person name="Koornneef M."/>
            <person name="Bentsink L."/>
            <person name="Dellapenna D."/>
        </authorList>
    </citation>
    <scope>FUNCTION</scope>
    <source>
        <strain>cv. Columbia</strain>
        <strain>cv. Cvi-0</strain>
        <strain>cv. Landsberg erecta</strain>
    </source>
</reference>
<reference key="6">
    <citation type="journal article" date="2009" name="Plant Physiol.">
        <title>Large-scale Arabidopsis phosphoproteome profiling reveals novel chloroplast kinase substrates and phosphorylation networks.</title>
        <authorList>
            <person name="Reiland S."/>
            <person name="Messerli G."/>
            <person name="Baerenfaller K."/>
            <person name="Gerrits B."/>
            <person name="Endler A."/>
            <person name="Grossmann J."/>
            <person name="Gruissem W."/>
            <person name="Baginsky S."/>
        </authorList>
    </citation>
    <scope>PHOSPHORYLATION [LARGE SCALE ANALYSIS] AT SER-821</scope>
    <scope>IDENTIFICATION BY MASS SPECTROMETRY [LARGE SCALE ANALYSIS]</scope>
</reference>
<reference key="7">
    <citation type="journal article" date="2012" name="Mol. Cell. Proteomics">
        <title>Comparative large-scale characterisation of plant vs. mammal proteins reveals similar and idiosyncratic N-alpha acetylation features.</title>
        <authorList>
            <person name="Bienvenut W.V."/>
            <person name="Sumpton D."/>
            <person name="Martinez A."/>
            <person name="Lilla S."/>
            <person name="Espagne C."/>
            <person name="Meinnel T."/>
            <person name="Giglione C."/>
        </authorList>
    </citation>
    <scope>ACETYLATION [LARGE SCALE ANALYSIS] AT MET-1</scope>
    <scope>IDENTIFICATION BY MASS SPECTROMETRY [LARGE SCALE ANALYSIS]</scope>
</reference>
<reference key="8">
    <citation type="journal article" date="2014" name="Plant J.">
        <title>Two inositol hexakisphosphate kinases drive inositol pyrophosphate synthesis in plants.</title>
        <authorList>
            <person name="Desai M."/>
            <person name="Rangarajan P."/>
            <person name="Donahue J.L."/>
            <person name="Williams S.P."/>
            <person name="Land E.S."/>
            <person name="Mandal M.K."/>
            <person name="Phillippy B.Q."/>
            <person name="Perera I.Y."/>
            <person name="Raboy V."/>
            <person name="Gillaspy G.E."/>
        </authorList>
    </citation>
    <scope>FUNCTION</scope>
    <scope>MUTAGENESIS OF ASP-292</scope>
    <scope>CATALYTIC ACTIVITY</scope>
    <scope>TISSUE SPECIFICITY</scope>
    <source>
        <strain>cv. Columbia</strain>
    </source>
</reference>
<reference key="9">
    <citation type="journal article" date="2015" name="Plant Cell">
        <title>VIH2 regulates the synthesis of inositol pyrophosphate InsP8 and jasmonate-dependent defenses in Arabidopsis.</title>
        <authorList>
            <person name="Laha D."/>
            <person name="Johnen P."/>
            <person name="Azevedo C."/>
            <person name="Dynowski M."/>
            <person name="Weiss M."/>
            <person name="Capolicchio S."/>
            <person name="Mao H."/>
            <person name="Iven T."/>
            <person name="Steenbergen M."/>
            <person name="Freyer M."/>
            <person name="Gaugler P."/>
            <person name="de Campos M.K."/>
            <person name="Zheng N."/>
            <person name="Feussner I."/>
            <person name="Jessen H.J."/>
            <person name="Van Wees S.C."/>
            <person name="Saiardi A."/>
            <person name="Schaaf G."/>
        </authorList>
    </citation>
    <scope>FUNCTION</scope>
    <scope>DISRUPTION PHENOTYPE</scope>
    <scope>MUTAGENESIS OF LYS-219 AND ASP-292</scope>
    <scope>TISSUE SPECIFICITY</scope>
    <source>
        <strain>cv. Columbia</strain>
    </source>
</reference>
<feature type="chain" id="PRO_0000439498" description="Inositol hexakisphosphate and diphosphoinositol-pentakisphosphate kinase VIP1">
    <location>
        <begin position="1"/>
        <end position="1050"/>
    </location>
</feature>
<feature type="region of interest" description="Polyphosphoinositide-binding domain" evidence="1">
    <location>
        <begin position="355"/>
        <end position="429"/>
    </location>
</feature>
<feature type="region of interest" description="Disordered" evidence="2">
    <location>
        <begin position="817"/>
        <end position="855"/>
    </location>
</feature>
<feature type="compositionally biased region" description="Basic and acidic residues" evidence="2">
    <location>
        <begin position="837"/>
        <end position="846"/>
    </location>
</feature>
<feature type="binding site" evidence="1">
    <location>
        <begin position="23"/>
        <end position="24"/>
    </location>
    <ligand>
        <name>substrate</name>
    </ligand>
</feature>
<feature type="binding site" evidence="1">
    <location>
        <position position="104"/>
    </location>
    <ligand>
        <name>ATP</name>
        <dbReference type="ChEBI" id="CHEBI:30616"/>
    </ligand>
</feature>
<feature type="binding site" evidence="1">
    <location>
        <position position="157"/>
    </location>
    <ligand>
        <name>ATP</name>
        <dbReference type="ChEBI" id="CHEBI:30616"/>
    </ligand>
</feature>
<feature type="binding site" evidence="1">
    <location>
        <position position="164"/>
    </location>
    <ligand>
        <name>ATP</name>
        <dbReference type="ChEBI" id="CHEBI:30616"/>
    </ligand>
</feature>
<feature type="binding site" evidence="1">
    <location>
        <begin position="183"/>
        <end position="184"/>
    </location>
    <ligand>
        <name>substrate</name>
    </ligand>
</feature>
<feature type="binding site" evidence="1">
    <location>
        <position position="183"/>
    </location>
    <ligand>
        <name>ATP</name>
        <dbReference type="ChEBI" id="CHEBI:30616"/>
    </ligand>
</feature>
<feature type="binding site" evidence="1">
    <location>
        <begin position="208"/>
        <end position="211"/>
    </location>
    <ligand>
        <name>ATP</name>
        <dbReference type="ChEBI" id="CHEBI:30616"/>
    </ligand>
</feature>
<feature type="binding site" evidence="1">
    <location>
        <begin position="217"/>
        <end position="219"/>
    </location>
    <ligand>
        <name>ATP</name>
        <dbReference type="ChEBI" id="CHEBI:30616"/>
    </ligand>
</feature>
<feature type="binding site" evidence="1">
    <location>
        <position position="219"/>
    </location>
    <ligand>
        <name>substrate</name>
    </ligand>
</feature>
<feature type="binding site" evidence="1">
    <location>
        <position position="233"/>
    </location>
    <ligand>
        <name>substrate</name>
    </ligand>
</feature>
<feature type="binding site" evidence="1">
    <location>
        <position position="235"/>
    </location>
    <ligand>
        <name>ATP</name>
        <dbReference type="ChEBI" id="CHEBI:30616"/>
    </ligand>
</feature>
<feature type="binding site" evidence="1">
    <location>
        <position position="280"/>
    </location>
    <ligand>
        <name>ATP</name>
        <dbReference type="ChEBI" id="CHEBI:30616"/>
    </ligand>
</feature>
<feature type="binding site" evidence="1">
    <location>
        <begin position="292"/>
        <end position="294"/>
    </location>
    <ligand>
        <name>ATP</name>
        <dbReference type="ChEBI" id="CHEBI:30616"/>
    </ligand>
</feature>
<feature type="binding site" evidence="1">
    <location>
        <begin position="297"/>
        <end position="300"/>
    </location>
    <ligand>
        <name>substrate</name>
    </ligand>
</feature>
<feature type="modified residue" description="N-acetylmethionine" evidence="14">
    <location>
        <position position="1"/>
    </location>
</feature>
<feature type="modified residue" description="Phosphoserine" evidence="13">
    <location>
        <position position="821"/>
    </location>
</feature>
<feature type="mutagenesis site" description="Loss of activity." evidence="5">
    <original>K</original>
    <variation>A</variation>
    <location>
        <position position="219"/>
    </location>
</feature>
<feature type="mutagenesis site" description="Loss of activity." evidence="4 5">
    <original>D</original>
    <variation>A</variation>
    <location>
        <position position="292"/>
    </location>
</feature>
<feature type="sequence conflict" description="In Ref. 4; BAE99797." evidence="9" ref="4">
    <original>H</original>
    <variation>F</variation>
    <location>
        <position position="505"/>
    </location>
</feature>
<evidence type="ECO:0000250" key="1">
    <source>
        <dbReference type="UniProtKB" id="O43314"/>
    </source>
</evidence>
<evidence type="ECO:0000256" key="2">
    <source>
        <dbReference type="SAM" id="MobiDB-lite"/>
    </source>
</evidence>
<evidence type="ECO:0000269" key="3">
    <source>
    </source>
</evidence>
<evidence type="ECO:0000269" key="4">
    <source>
    </source>
</evidence>
<evidence type="ECO:0000269" key="5">
    <source>
    </source>
</evidence>
<evidence type="ECO:0000303" key="6">
    <source>
    </source>
</evidence>
<evidence type="ECO:0000303" key="7">
    <source>
    </source>
</evidence>
<evidence type="ECO:0000303" key="8">
    <source>
    </source>
</evidence>
<evidence type="ECO:0000305" key="9"/>
<evidence type="ECO:0000312" key="10">
    <source>
        <dbReference type="Araport" id="AT3G01310"/>
    </source>
</evidence>
<evidence type="ECO:0000312" key="11">
    <source>
        <dbReference type="EMBL" id="AAF03495.1"/>
    </source>
</evidence>
<evidence type="ECO:0000312" key="12">
    <source>
        <dbReference type="EMBL" id="AAF26144.1"/>
    </source>
</evidence>
<evidence type="ECO:0007744" key="13">
    <source>
    </source>
</evidence>
<evidence type="ECO:0007744" key="14">
    <source>
    </source>
</evidence>
<name>VIP1L_ARATH</name>
<accession>F4J8C6</accession>
<accession>Q0WSV1</accession>
<accession>Q9MAD6</accession>
<accession>Q9SRH8</accession>
<proteinExistence type="evidence at protein level"/>
<comment type="function">
    <text evidence="3 4 5">Bifunctional inositol kinase that acts in concert with the IP6K kinases to synthesize the diphosphate group-containing inositol pyrophosphates diphosphoinositol pentakisphosphate, PP-InsP5, and bis-diphosphoinositol tetrakisphosphate, (PP)2-InsP4. PP-InsP5 and (PP)2-InsP4, also respectively called InsP7 and InsP8, may regulate a variety of cellular processes, including apoptosis, vesicle trafficking, cytoskeletal dynamics, and exocytosis. Phosphorylates inositol hexakisphosphate (InsP6) at position 1 to produce PP-InsP5 which is in turn phosphorylated by IP6Ks to produce (PP)2-InsP4. Alternatively, phosphorylates PP-InsP5 at position 1, produced by IP6Ks from InsP6, to produce (PP)2-InsP4 (PubMed:25231822). Probably involved in vitamin E homeostasis via the regulation of gamma-tocopherol biosynthesis (PubMed:17077148). Catalyzes the conversion of InsP7 to InsP8. Regulates jasmonic acid (JA) perception and plant defenses against herbivorous insects (e.g. P.rapae) and necrotrophic fungi (e.g. M.brassicae, B.cinerea and A.brassicicola) by triggering the production of jasmonate-induced pools of InsP8 and subsequent activation of SCF(COI1) E3 ubiquitin ligase complexes with JAZ proteins (e.g. TIFY10A/JAZ1) (PubMed:25901085).</text>
</comment>
<comment type="catalytic activity">
    <reaction evidence="4">
        <text>1D-myo-inositol hexakisphosphate + ATP = 1-diphospho-1D-myo-inositol 2,3,4,5,6-pentakisphosphate + ADP</text>
        <dbReference type="Rhea" id="RHEA:37459"/>
        <dbReference type="ChEBI" id="CHEBI:30616"/>
        <dbReference type="ChEBI" id="CHEBI:58130"/>
        <dbReference type="ChEBI" id="CHEBI:74946"/>
        <dbReference type="ChEBI" id="CHEBI:456216"/>
        <dbReference type="EC" id="2.7.4.24"/>
    </reaction>
</comment>
<comment type="catalytic activity">
    <reaction evidence="4">
        <text>5-diphospho-1D-myo-inositol 1,2,3,4,6-pentakisphosphate + ATP + H(+) = 1,5-bis(diphospho)-1D-myo-inositol 2,3,4,6-tetrakisphosphate + ADP</text>
        <dbReference type="Rhea" id="RHEA:10276"/>
        <dbReference type="ChEBI" id="CHEBI:15378"/>
        <dbReference type="ChEBI" id="CHEBI:30616"/>
        <dbReference type="ChEBI" id="CHEBI:58628"/>
        <dbReference type="ChEBI" id="CHEBI:77983"/>
        <dbReference type="ChEBI" id="CHEBI:456216"/>
        <dbReference type="EC" id="2.7.4.24"/>
    </reaction>
</comment>
<comment type="subcellular location">
    <subcellularLocation>
        <location evidence="1">Cytoplasm</location>
        <location evidence="1">Cytosol</location>
    </subcellularLocation>
</comment>
<comment type="alternative products">
    <event type="alternative splicing"/>
    <isoform>
        <id>F4J8C6-1</id>
        <name>1</name>
        <sequence type="displayed"/>
    </isoform>
    <text evidence="10">Additional isoforms seem to exist.</text>
</comment>
<comment type="tissue specificity">
    <text evidence="4 5">Mostly expressed in vegetative tissues (e.g. leaves and stems), and, to a lower extent, in roots, shoots and reproductive tissues (e.g. flowers and siliques) (PubMed:25231822, PubMed:25901085). Also present in mature pollen (PubMed:25901085).</text>
</comment>
<comment type="disruption phenotype">
    <text evidence="5">Abnormal accumulation of InsP7 and reduced levels of InsP8. Increased weight increase of P.rapae and M.brassicae larvae feeded on mutant plants thus leading to a reduced resistance. Increased susceptibility to the necrotrophic fungi B.cinerea and A.brassicicola. Increased levels of jasmonic acid (JA) and bioactive conjugates such as JA-Leu/Ile and JA-Val upon mechanical wounding, but reduced induction of JA-responsive genes in challenged mutant plants.</text>
</comment>
<comment type="similarity">
    <text evidence="9">Belongs to the histidine acid phosphatase family. VIP1 subfamily.</text>
</comment>
<comment type="sequence caution" evidence="9">
    <conflict type="erroneous gene model prediction">
        <sequence resource="EMBL-CDS" id="AAF03495"/>
    </conflict>
</comment>
<comment type="sequence caution" evidence="9">
    <conflict type="erroneous gene model prediction">
        <sequence resource="EMBL-CDS" id="AAF26144"/>
    </conflict>
</comment>
<dbReference type="EC" id="2.7.4.24" evidence="4"/>
<dbReference type="EMBL" id="AC008261">
    <property type="protein sequence ID" value="AAF26144.1"/>
    <property type="status" value="ALT_SEQ"/>
    <property type="molecule type" value="Genomic_DNA"/>
</dbReference>
<dbReference type="EMBL" id="AC010676">
    <property type="protein sequence ID" value="AAF03495.1"/>
    <property type="status" value="ALT_SEQ"/>
    <property type="molecule type" value="Genomic_DNA"/>
</dbReference>
<dbReference type="EMBL" id="CP002686">
    <property type="protein sequence ID" value="AEE73636.1"/>
    <property type="molecule type" value="Genomic_DNA"/>
</dbReference>
<dbReference type="EMBL" id="BT010149">
    <property type="protein sequence ID" value="AAQ22618.1"/>
    <property type="molecule type" value="mRNA"/>
</dbReference>
<dbReference type="EMBL" id="AK227817">
    <property type="protein sequence ID" value="BAE99797.1"/>
    <property type="molecule type" value="mRNA"/>
</dbReference>
<dbReference type="RefSeq" id="NP_001030614.1">
    <molecule id="F4J8C6-1"/>
    <property type="nucleotide sequence ID" value="NM_001035537.3"/>
</dbReference>
<dbReference type="SMR" id="F4J8C6"/>
<dbReference type="FunCoup" id="F4J8C6">
    <property type="interactions" value="2635"/>
</dbReference>
<dbReference type="STRING" id="3702.F4J8C6"/>
<dbReference type="iPTMnet" id="F4J8C6"/>
<dbReference type="PaxDb" id="3702-AT3G01310.1"/>
<dbReference type="ProteomicsDB" id="242747">
    <molecule id="F4J8C6-1"/>
</dbReference>
<dbReference type="EnsemblPlants" id="AT3G01310.2">
    <molecule id="F4J8C6-1"/>
    <property type="protein sequence ID" value="AT3G01310.2"/>
    <property type="gene ID" value="AT3G01310"/>
</dbReference>
<dbReference type="GeneID" id="821297"/>
<dbReference type="Gramene" id="AT3G01310.2">
    <molecule id="F4J8C6-1"/>
    <property type="protein sequence ID" value="AT3G01310.2"/>
    <property type="gene ID" value="AT3G01310"/>
</dbReference>
<dbReference type="KEGG" id="ath:AT3G01310"/>
<dbReference type="Araport" id="AT3G01310"/>
<dbReference type="TAIR" id="AT3G01310">
    <property type="gene designation" value="ATVIP1"/>
</dbReference>
<dbReference type="eggNOG" id="KOG1057">
    <property type="taxonomic scope" value="Eukaryota"/>
</dbReference>
<dbReference type="HOGENOM" id="CLU_000914_3_0_1"/>
<dbReference type="InParanoid" id="F4J8C6"/>
<dbReference type="PRO" id="PR:F4J8C6"/>
<dbReference type="Proteomes" id="UP000006548">
    <property type="component" value="Chromosome 3"/>
</dbReference>
<dbReference type="ExpressionAtlas" id="F4J8C6">
    <property type="expression patterns" value="baseline and differential"/>
</dbReference>
<dbReference type="GO" id="GO:0005829">
    <property type="term" value="C:cytosol"/>
    <property type="evidence" value="ECO:0007669"/>
    <property type="project" value="UniProtKB-SubCell"/>
</dbReference>
<dbReference type="GO" id="GO:0005886">
    <property type="term" value="C:plasma membrane"/>
    <property type="evidence" value="ECO:0000314"/>
    <property type="project" value="UniProtKB"/>
</dbReference>
<dbReference type="GO" id="GO:0033857">
    <property type="term" value="F:5-diphosphoinositol pentakisphosphate 1-kinase activity"/>
    <property type="evidence" value="ECO:0000315"/>
    <property type="project" value="UniProtKB"/>
</dbReference>
<dbReference type="GO" id="GO:0005524">
    <property type="term" value="F:ATP binding"/>
    <property type="evidence" value="ECO:0007669"/>
    <property type="project" value="UniProtKB-KW"/>
</dbReference>
<dbReference type="GO" id="GO:0000829">
    <property type="term" value="F:diphosphoinositol pentakisphosphate kinase activity"/>
    <property type="evidence" value="ECO:0000315"/>
    <property type="project" value="UniProtKB"/>
</dbReference>
<dbReference type="GO" id="GO:0052723">
    <property type="term" value="F:inositol hexakisphosphate 1-kinase activity"/>
    <property type="evidence" value="ECO:0007669"/>
    <property type="project" value="RHEA"/>
</dbReference>
<dbReference type="GO" id="GO:0000828">
    <property type="term" value="F:inositol hexakisphosphate kinase activity"/>
    <property type="evidence" value="ECO:0000315"/>
    <property type="project" value="UniProtKB"/>
</dbReference>
<dbReference type="GO" id="GO:0050832">
    <property type="term" value="P:defense response to fungus"/>
    <property type="evidence" value="ECO:0000315"/>
    <property type="project" value="UniProtKB"/>
</dbReference>
<dbReference type="GO" id="GO:0006020">
    <property type="term" value="P:inositol metabolic process"/>
    <property type="evidence" value="ECO:0000315"/>
    <property type="project" value="UniProtKB"/>
</dbReference>
<dbReference type="GO" id="GO:0032958">
    <property type="term" value="P:inositol phosphate biosynthetic process"/>
    <property type="evidence" value="ECO:0000315"/>
    <property type="project" value="UniProtKB"/>
</dbReference>
<dbReference type="GO" id="GO:0009861">
    <property type="term" value="P:jasmonic acid and ethylene-dependent systemic resistance"/>
    <property type="evidence" value="ECO:0000315"/>
    <property type="project" value="UniProtKB"/>
</dbReference>
<dbReference type="GO" id="GO:1905036">
    <property type="term" value="P:positive regulation of antifungal innate immune response"/>
    <property type="evidence" value="ECO:0000315"/>
    <property type="project" value="UniProtKB"/>
</dbReference>
<dbReference type="GO" id="GO:1900367">
    <property type="term" value="P:positive regulation of defense response to insect"/>
    <property type="evidence" value="ECO:0000315"/>
    <property type="project" value="UniProtKB"/>
</dbReference>
<dbReference type="GO" id="GO:1904966">
    <property type="term" value="P:positive regulation of vitamin E biosynthetic process"/>
    <property type="evidence" value="ECO:0000315"/>
    <property type="project" value="UniProtKB"/>
</dbReference>
<dbReference type="CDD" id="cd07061">
    <property type="entry name" value="HP_HAP_like"/>
    <property type="match status" value="1"/>
</dbReference>
<dbReference type="FunFam" id="3.30.470.20:FF:000019">
    <property type="entry name" value="Inositol hexakisphosphate and diphosphoinositol-pentakisphosphate kinase"/>
    <property type="match status" value="1"/>
</dbReference>
<dbReference type="FunFam" id="3.40.50.11950:FF:000002">
    <property type="entry name" value="Inositol hexakisphosphate and diphosphoinositol-pentakisphosphate kinase"/>
    <property type="match status" value="1"/>
</dbReference>
<dbReference type="Gene3D" id="3.40.50.11950">
    <property type="match status" value="1"/>
</dbReference>
<dbReference type="Gene3D" id="3.30.470.20">
    <property type="entry name" value="ATP-grasp fold, B domain"/>
    <property type="match status" value="1"/>
</dbReference>
<dbReference type="Gene3D" id="3.40.50.1240">
    <property type="entry name" value="Phosphoglycerate mutase-like"/>
    <property type="match status" value="1"/>
</dbReference>
<dbReference type="InterPro" id="IPR033379">
    <property type="entry name" value="Acid_Pase_AS"/>
</dbReference>
<dbReference type="InterPro" id="IPR000560">
    <property type="entry name" value="His_Pase_clade-2"/>
</dbReference>
<dbReference type="InterPro" id="IPR037446">
    <property type="entry name" value="His_Pase_VIP1"/>
</dbReference>
<dbReference type="InterPro" id="IPR029033">
    <property type="entry name" value="His_PPase_superfam"/>
</dbReference>
<dbReference type="InterPro" id="IPR040557">
    <property type="entry name" value="VIP1_N"/>
</dbReference>
<dbReference type="PANTHER" id="PTHR12750">
    <property type="entry name" value="DIPHOSPHOINOSITOL PENTAKISPHOSPHATE KINASE"/>
    <property type="match status" value="1"/>
</dbReference>
<dbReference type="PANTHER" id="PTHR12750:SF23">
    <property type="entry name" value="INOSITOL HEXAKISPHOSPHATE AND DIPHOSPHOINOSITOL-PENTAKISPHOSPHATE KINASE VIP1"/>
    <property type="match status" value="1"/>
</dbReference>
<dbReference type="Pfam" id="PF00328">
    <property type="entry name" value="His_Phos_2"/>
    <property type="match status" value="1"/>
</dbReference>
<dbReference type="Pfam" id="PF18086">
    <property type="entry name" value="PPIP5K2_N"/>
    <property type="match status" value="1"/>
</dbReference>
<dbReference type="SUPFAM" id="SSF56059">
    <property type="entry name" value="Glutathione synthetase ATP-binding domain-like"/>
    <property type="match status" value="1"/>
</dbReference>
<dbReference type="SUPFAM" id="SSF53254">
    <property type="entry name" value="Phosphoglycerate mutase-like"/>
    <property type="match status" value="1"/>
</dbReference>
<dbReference type="PROSITE" id="PS00616">
    <property type="entry name" value="HIS_ACID_PHOSPHAT_1"/>
    <property type="match status" value="1"/>
</dbReference>
<keyword id="KW-0007">Acetylation</keyword>
<keyword id="KW-0025">Alternative splicing</keyword>
<keyword id="KW-0067">ATP-binding</keyword>
<keyword id="KW-0963">Cytoplasm</keyword>
<keyword id="KW-1184">Jasmonic acid signaling pathway</keyword>
<keyword id="KW-0418">Kinase</keyword>
<keyword id="KW-0547">Nucleotide-binding</keyword>
<keyword id="KW-0597">Phosphoprotein</keyword>
<keyword id="KW-0611">Plant defense</keyword>
<keyword id="KW-1185">Reference proteome</keyword>
<keyword id="KW-0808">Transferase</keyword>
<gene>
    <name evidence="7" type="primary">VIP1</name>
    <name evidence="6" type="synonym">QVE7</name>
    <name evidence="8" type="synonym">VIH2</name>
    <name evidence="10" type="ordered locus">At3g01310</name>
    <name evidence="11" type="ORF">T22N4.6</name>
    <name evidence="12" type="ORF">T4P13.1</name>
</gene>
<protein>
    <recommendedName>
        <fullName evidence="7">Inositol hexakisphosphate and diphosphoinositol-pentakisphosphate kinase VIP1</fullName>
        <ecNumber evidence="4">2.7.4.24</ecNumber>
    </recommendedName>
    <alternativeName>
        <fullName evidence="6">Probable protein QUANTITATIVE VITAMIN E-7</fullName>
    </alternativeName>
    <alternativeName>
        <fullName evidence="8">Protein VIP HOMOLOG 2</fullName>
    </alternativeName>
    <alternativeName>
        <fullName evidence="7">VIP1 homolog protein 1</fullName>
        <shortName evidence="7">Arabidopsis homolog protein of yeast VIP1 1</shortName>
        <shortName evidence="7">AtVIP1</shortName>
    </alternativeName>
</protein>
<sequence>MEMEEGASGVGEKIKIGVCVMEKKVFSAPMGEILDRLQSFGEFEILHFGDKVILEDPIESWPICDCLIAFHSSGYPLEKAQAYAALRKPFLVNELDPQYLLHDRRKVYEHLEMYGIPVPRYACVNRKVPNQDLHYFVEEEDFVEVHGERFWKPFVEKPVNGDDHSIMIYYPSSAGGGMKELFRKIGNRSSEFHPDVRRVRREGSYIYEEFMATGGTDVKVYTVGPEYAHAEARKSPVVDGVVMRNTDGKEVRYPVLLTPAEKQMAREVCIAFRQAVCGFDLLRSEGCSYVCDVNGWSFVKNSYKYYDDAACVLRKMCLDAKAPHLSSTLPPTLPWKVNEPVQSNEGLTRQGSGIIGTFGQSEELRCVIAVVRHGDRTPKQKVKLKVTEEKLLNLMLKYNGGKPRAETKLKSAVQLQDLLDATRMLVPRTRPGRESDSDAEDLEHAEKLRQVKAVLEEGGHFSGIYRKVQLKPLKWVKIPKSDGDGEEERPVEALMVLKYGGVLTHAGRKQAEELGRYFRNNMYPGEGTGLLRLHSTYRHDLKIYSSDEGRVQMSAAAFAKGLLDLEGQLTPILVSLVSKDSSMLDGLDNASIEMEAAKARLNEIVTSGTKMIDDDQVSSEDFPWMTDGAGLPPNAHELLRELVKLTKNVTEQVRLLAMDEDENLTEPYDIIPPYDQAKALGKTNIDSDRIASGLPCGSEGFLLMFARWIKLARDLYNERKDRFDITQIPDVYDSCKYDLLHNSHLDLKGLDELFKVAQLLADGVIPNEYGINPQQKLKIGSKIARRLMGKILIDLRNTREEALSVAELKESQEQVLSLSASQREDRNSQPKLFINSDELRRPGTGDKDEDDDKETKYRLDPKYANVKTPERHVRTRLYFTSESHIHSLMNVLRYCNLDESLLGEESLICQNALERLCKTKELDYMSYIVLRLFENTEVSLEDPKRFRIELTFSRGADLSPLRNNDDEAETLLREHTLPIMGPERLQEVGSCLSLETMEKMVRPFAMPAEDFPPASTPVGFSGYFSKSAAVLERLVNLFHNYKNSSSNGRS</sequence>
<organism>
    <name type="scientific">Arabidopsis thaliana</name>
    <name type="common">Mouse-ear cress</name>
    <dbReference type="NCBI Taxonomy" id="3702"/>
    <lineage>
        <taxon>Eukaryota</taxon>
        <taxon>Viridiplantae</taxon>
        <taxon>Streptophyta</taxon>
        <taxon>Embryophyta</taxon>
        <taxon>Tracheophyta</taxon>
        <taxon>Spermatophyta</taxon>
        <taxon>Magnoliopsida</taxon>
        <taxon>eudicotyledons</taxon>
        <taxon>Gunneridae</taxon>
        <taxon>Pentapetalae</taxon>
        <taxon>rosids</taxon>
        <taxon>malvids</taxon>
        <taxon>Brassicales</taxon>
        <taxon>Brassicaceae</taxon>
        <taxon>Camelineae</taxon>
        <taxon>Arabidopsis</taxon>
    </lineage>
</organism>